<gene>
    <name evidence="1" type="primary">iscS</name>
    <name type="ordered locus">SeAg_B2698</name>
</gene>
<organism>
    <name type="scientific">Salmonella agona (strain SL483)</name>
    <dbReference type="NCBI Taxonomy" id="454166"/>
    <lineage>
        <taxon>Bacteria</taxon>
        <taxon>Pseudomonadati</taxon>
        <taxon>Pseudomonadota</taxon>
        <taxon>Gammaproteobacteria</taxon>
        <taxon>Enterobacterales</taxon>
        <taxon>Enterobacteriaceae</taxon>
        <taxon>Salmonella</taxon>
    </lineage>
</organism>
<evidence type="ECO:0000255" key="1">
    <source>
        <dbReference type="HAMAP-Rule" id="MF_00331"/>
    </source>
</evidence>
<dbReference type="EC" id="2.8.1.7" evidence="1"/>
<dbReference type="EMBL" id="CP001138">
    <property type="protein sequence ID" value="ACH51972.1"/>
    <property type="molecule type" value="Genomic_DNA"/>
</dbReference>
<dbReference type="RefSeq" id="WP_000775263.1">
    <property type="nucleotide sequence ID" value="NC_011149.1"/>
</dbReference>
<dbReference type="SMR" id="B5F1C0"/>
<dbReference type="KEGG" id="sea:SeAg_B2698"/>
<dbReference type="HOGENOM" id="CLU_003433_0_2_6"/>
<dbReference type="UniPathway" id="UPA00266"/>
<dbReference type="Proteomes" id="UP000008819">
    <property type="component" value="Chromosome"/>
</dbReference>
<dbReference type="GO" id="GO:1990221">
    <property type="term" value="C:L-cysteine desulfurase complex"/>
    <property type="evidence" value="ECO:0007669"/>
    <property type="project" value="UniProtKB-ARBA"/>
</dbReference>
<dbReference type="GO" id="GO:0051537">
    <property type="term" value="F:2 iron, 2 sulfur cluster binding"/>
    <property type="evidence" value="ECO:0007669"/>
    <property type="project" value="UniProtKB-UniRule"/>
</dbReference>
<dbReference type="GO" id="GO:0031071">
    <property type="term" value="F:cysteine desulfurase activity"/>
    <property type="evidence" value="ECO:0007669"/>
    <property type="project" value="UniProtKB-UniRule"/>
</dbReference>
<dbReference type="GO" id="GO:0046872">
    <property type="term" value="F:metal ion binding"/>
    <property type="evidence" value="ECO:0007669"/>
    <property type="project" value="UniProtKB-KW"/>
</dbReference>
<dbReference type="GO" id="GO:0030170">
    <property type="term" value="F:pyridoxal phosphate binding"/>
    <property type="evidence" value="ECO:0007669"/>
    <property type="project" value="UniProtKB-UniRule"/>
</dbReference>
<dbReference type="GO" id="GO:0044571">
    <property type="term" value="P:[2Fe-2S] cluster assembly"/>
    <property type="evidence" value="ECO:0007669"/>
    <property type="project" value="UniProtKB-UniRule"/>
</dbReference>
<dbReference type="FunFam" id="3.40.640.10:FF:000003">
    <property type="entry name" value="Cysteine desulfurase IscS"/>
    <property type="match status" value="1"/>
</dbReference>
<dbReference type="FunFam" id="3.90.1150.10:FF:000002">
    <property type="entry name" value="Cysteine desulfurase IscS"/>
    <property type="match status" value="1"/>
</dbReference>
<dbReference type="Gene3D" id="3.90.1150.10">
    <property type="entry name" value="Aspartate Aminotransferase, domain 1"/>
    <property type="match status" value="1"/>
</dbReference>
<dbReference type="Gene3D" id="3.40.640.10">
    <property type="entry name" value="Type I PLP-dependent aspartate aminotransferase-like (Major domain)"/>
    <property type="match status" value="1"/>
</dbReference>
<dbReference type="HAMAP" id="MF_00331">
    <property type="entry name" value="Cys_desulf_IscS"/>
    <property type="match status" value="1"/>
</dbReference>
<dbReference type="InterPro" id="IPR000192">
    <property type="entry name" value="Aminotrans_V_dom"/>
</dbReference>
<dbReference type="InterPro" id="IPR020578">
    <property type="entry name" value="Aminotrans_V_PyrdxlP_BS"/>
</dbReference>
<dbReference type="InterPro" id="IPR010240">
    <property type="entry name" value="Cys_deSase_IscS"/>
</dbReference>
<dbReference type="InterPro" id="IPR016454">
    <property type="entry name" value="Cysteine_dSase"/>
</dbReference>
<dbReference type="InterPro" id="IPR015424">
    <property type="entry name" value="PyrdxlP-dep_Trfase"/>
</dbReference>
<dbReference type="InterPro" id="IPR015421">
    <property type="entry name" value="PyrdxlP-dep_Trfase_major"/>
</dbReference>
<dbReference type="InterPro" id="IPR015422">
    <property type="entry name" value="PyrdxlP-dep_Trfase_small"/>
</dbReference>
<dbReference type="NCBIfam" id="TIGR02006">
    <property type="entry name" value="IscS"/>
    <property type="match status" value="1"/>
</dbReference>
<dbReference type="NCBIfam" id="NF002806">
    <property type="entry name" value="PRK02948.1"/>
    <property type="match status" value="1"/>
</dbReference>
<dbReference type="NCBIfam" id="NF010611">
    <property type="entry name" value="PRK14012.1"/>
    <property type="match status" value="1"/>
</dbReference>
<dbReference type="PANTHER" id="PTHR11601:SF34">
    <property type="entry name" value="CYSTEINE DESULFURASE"/>
    <property type="match status" value="1"/>
</dbReference>
<dbReference type="PANTHER" id="PTHR11601">
    <property type="entry name" value="CYSTEINE DESULFURYLASE FAMILY MEMBER"/>
    <property type="match status" value="1"/>
</dbReference>
<dbReference type="Pfam" id="PF00266">
    <property type="entry name" value="Aminotran_5"/>
    <property type="match status" value="1"/>
</dbReference>
<dbReference type="PIRSF" id="PIRSF005572">
    <property type="entry name" value="NifS"/>
    <property type="match status" value="1"/>
</dbReference>
<dbReference type="SUPFAM" id="SSF53383">
    <property type="entry name" value="PLP-dependent transferases"/>
    <property type="match status" value="1"/>
</dbReference>
<dbReference type="PROSITE" id="PS00595">
    <property type="entry name" value="AA_TRANSFER_CLASS_5"/>
    <property type="match status" value="1"/>
</dbReference>
<sequence>MKLPIYLDYSATTPVDPRVAEKMMQFLTLDGTFGNPASRSHRFGWQAEEAVDIARNQIAELVGADPREIVFTSGATESDNLAIKGAANFYQKKGKHIITSKTEHKAVLDTCRQLEREGFEVTYLAPQRNGIIDLNELEAAMRDDTILVSIMHVNNEIGVVQDIATIGEMCRARGIIYHVDATQSVGKLPIDLSQLKVDLMSFSGHKIYGPKGIGALYVRRKPRIRIEAQMHGGGHERGMRSGTLPVHQIVGMGEAYRIAKEEMETEMARLRGLRNRLWNGIKDIEEVYLNGDLEQGAPNILNVSFNYVEGESLIMALKDLAVSSGSACTSASLEPSYVLRALGMNDELAHSSIRFSLGRFTTEEEIDYTIDLVRKSIGRLRDLSPLWEMYKQGVDLNSIEWAHH</sequence>
<comment type="function">
    <text evidence="1">Master enzyme that delivers sulfur to a number of partners involved in Fe-S cluster assembly, tRNA modification or cofactor biosynthesis. Catalyzes the removal of elemental sulfur and selenium atoms from cysteine and selenocysteine to produce alanine. Functions as a sulfur delivery protein for Fe-S cluster synthesis onto IscU, an Fe-S scaffold assembly protein, as well as other S acceptor proteins. Also functions as a selenium delivery protein in the pathway for the biosynthesis of selenophosphate.</text>
</comment>
<comment type="catalytic activity">
    <reaction evidence="1">
        <text>(sulfur carrier)-H + L-cysteine = (sulfur carrier)-SH + L-alanine</text>
        <dbReference type="Rhea" id="RHEA:43892"/>
        <dbReference type="Rhea" id="RHEA-COMP:14737"/>
        <dbReference type="Rhea" id="RHEA-COMP:14739"/>
        <dbReference type="ChEBI" id="CHEBI:29917"/>
        <dbReference type="ChEBI" id="CHEBI:35235"/>
        <dbReference type="ChEBI" id="CHEBI:57972"/>
        <dbReference type="ChEBI" id="CHEBI:64428"/>
        <dbReference type="EC" id="2.8.1.7"/>
    </reaction>
</comment>
<comment type="cofactor">
    <cofactor evidence="1">
        <name>pyridoxal 5'-phosphate</name>
        <dbReference type="ChEBI" id="CHEBI:597326"/>
    </cofactor>
</comment>
<comment type="pathway">
    <text evidence="1">Cofactor biosynthesis; iron-sulfur cluster biosynthesis.</text>
</comment>
<comment type="subunit">
    <text evidence="1">Homodimer. Forms a heterotetramer with IscU, interacts with other sulfur acceptors.</text>
</comment>
<comment type="subcellular location">
    <subcellularLocation>
        <location evidence="1">Cytoplasm</location>
    </subcellularLocation>
</comment>
<comment type="similarity">
    <text evidence="1">Belongs to the class-V pyridoxal-phosphate-dependent aminotransferase family. NifS/IscS subfamily.</text>
</comment>
<protein>
    <recommendedName>
        <fullName evidence="1">Cysteine desulfurase IscS</fullName>
        <ecNumber evidence="1">2.8.1.7</ecNumber>
    </recommendedName>
</protein>
<feature type="chain" id="PRO_1000119640" description="Cysteine desulfurase IscS">
    <location>
        <begin position="1"/>
        <end position="404"/>
    </location>
</feature>
<feature type="active site" description="Cysteine persulfide intermediate" evidence="1">
    <location>
        <position position="328"/>
    </location>
</feature>
<feature type="binding site" evidence="1">
    <location>
        <begin position="75"/>
        <end position="76"/>
    </location>
    <ligand>
        <name>pyridoxal 5'-phosphate</name>
        <dbReference type="ChEBI" id="CHEBI:597326"/>
    </ligand>
</feature>
<feature type="binding site" evidence="1">
    <location>
        <position position="155"/>
    </location>
    <ligand>
        <name>pyridoxal 5'-phosphate</name>
        <dbReference type="ChEBI" id="CHEBI:597326"/>
    </ligand>
</feature>
<feature type="binding site" evidence="1">
    <location>
        <position position="183"/>
    </location>
    <ligand>
        <name>pyridoxal 5'-phosphate</name>
        <dbReference type="ChEBI" id="CHEBI:597326"/>
    </ligand>
</feature>
<feature type="binding site" evidence="1">
    <location>
        <begin position="203"/>
        <end position="205"/>
    </location>
    <ligand>
        <name>pyridoxal 5'-phosphate</name>
        <dbReference type="ChEBI" id="CHEBI:597326"/>
    </ligand>
</feature>
<feature type="binding site" evidence="1">
    <location>
        <position position="243"/>
    </location>
    <ligand>
        <name>pyridoxal 5'-phosphate</name>
        <dbReference type="ChEBI" id="CHEBI:597326"/>
    </ligand>
</feature>
<feature type="binding site" description="via persulfide group" evidence="1">
    <location>
        <position position="328"/>
    </location>
    <ligand>
        <name>[2Fe-2S] cluster</name>
        <dbReference type="ChEBI" id="CHEBI:190135"/>
        <note>ligand shared with IscU</note>
    </ligand>
</feature>
<feature type="modified residue" description="N6-(pyridoxal phosphate)lysine" evidence="1">
    <location>
        <position position="206"/>
    </location>
</feature>
<name>ISCS_SALA4</name>
<keyword id="KW-0001">2Fe-2S</keyword>
<keyword id="KW-0963">Cytoplasm</keyword>
<keyword id="KW-0408">Iron</keyword>
<keyword id="KW-0411">Iron-sulfur</keyword>
<keyword id="KW-0479">Metal-binding</keyword>
<keyword id="KW-0663">Pyridoxal phosphate</keyword>
<keyword id="KW-0808">Transferase</keyword>
<accession>B5F1C0</accession>
<proteinExistence type="inferred from homology"/>
<reference key="1">
    <citation type="journal article" date="2011" name="J. Bacteriol.">
        <title>Comparative genomics of 28 Salmonella enterica isolates: evidence for CRISPR-mediated adaptive sublineage evolution.</title>
        <authorList>
            <person name="Fricke W.F."/>
            <person name="Mammel M.K."/>
            <person name="McDermott P.F."/>
            <person name="Tartera C."/>
            <person name="White D.G."/>
            <person name="Leclerc J.E."/>
            <person name="Ravel J."/>
            <person name="Cebula T.A."/>
        </authorList>
    </citation>
    <scope>NUCLEOTIDE SEQUENCE [LARGE SCALE GENOMIC DNA]</scope>
    <source>
        <strain>SL483</strain>
    </source>
</reference>